<accession>J9VQV8</accession>
<proteinExistence type="evidence at protein level"/>
<protein>
    <recommendedName>
        <fullName evidence="4">Urease accessory protein 4</fullName>
    </recommendedName>
</protein>
<name>URE4_CRYNH</name>
<sequence length="327" mass="35807">MSSSMKAPLRNPPRLLAGEGRVHLSASNAHPCFSTSLAAYPLKLLSPTPLPSQPANFAVLYTLAYGGGLVAGDLVSLSVLIDPGCGLVMLTQGTTKVYKRRPGLRPLSHLHTSQPSSDPNLTRQRMHIRLCSSSFLLLLPDSVSPFRSSIYSQTQRFVLPADRTASVLILDWVNSGRGQRPQEGDEEIWSMDSYGSTNEIWVGDERIMRERMVLDNSHFGLNAGGSLSPIANQLSPYNVYATVLIIGPHLTTLFSYLAYLSDHSRQFQLKEPPGLAWSFSEIDDKLQAGVVRIAACEVEDARKWLREVMTAGGVAALVGEGMWPRCI</sequence>
<keyword id="KW-0143">Chaperone</keyword>
<keyword id="KW-0325">Glycoprotein</keyword>
<keyword id="KW-0472">Membrane</keyword>
<keyword id="KW-0996">Nickel insertion</keyword>
<keyword id="KW-0812">Transmembrane</keyword>
<keyword id="KW-1133">Transmembrane helix</keyword>
<keyword id="KW-0843">Virulence</keyword>
<gene>
    <name evidence="4" type="primary">URE4</name>
    <name type="ORF">CNAG_01166</name>
</gene>
<evidence type="ECO:0000255" key="1"/>
<evidence type="ECO:0000255" key="2">
    <source>
        <dbReference type="PROSITE-ProRule" id="PRU00498"/>
    </source>
</evidence>
<evidence type="ECO:0000269" key="3">
    <source>
    </source>
</evidence>
<evidence type="ECO:0000303" key="4">
    <source>
    </source>
</evidence>
<evidence type="ECO:0000305" key="5"/>
<feature type="chain" id="PRO_0000460745" description="Urease accessory protein 4">
    <location>
        <begin position="1"/>
        <end position="327"/>
    </location>
</feature>
<feature type="transmembrane region" description="Helical" evidence="1">
    <location>
        <begin position="239"/>
        <end position="259"/>
    </location>
</feature>
<feature type="glycosylation site" description="N-linked (GlcNAc...) asparagine" evidence="2">
    <location>
        <position position="120"/>
    </location>
</feature>
<comment type="function">
    <text evidence="3">Urease accessory protein required for the maturation and activation of urease via the functional incorporation of the urease nickel metallocenter (PubMed:23653445). Plays a role in host brain invasion (PubMed:23653445).</text>
</comment>
<comment type="subunit">
    <text evidence="3">URE4, URE6 and URE7 may form a complex that acts as a GTP-hydrolysis-dependent molecular chaperone, activating the urease apoprotein URE1.</text>
</comment>
<comment type="subcellular location">
    <subcellularLocation>
        <location evidence="1">Membrane</location>
        <topology evidence="1">Single-pass membrane protein</topology>
    </subcellularLocation>
</comment>
<comment type="disruption phenotype">
    <text evidence="3">Fails to grow on agar media with urea as the sole nitrogen source (PubMed:23653445). Leads to the inactivation of the URE1 urease and reduces the efficacy of brain invasion in mice (PubMed:23653445).</text>
</comment>
<comment type="similarity">
    <text evidence="5">Belongs to the UreD family.</text>
</comment>
<organism>
    <name type="scientific">Cryptococcus neoformans var. grubii serotype A (strain H99 / ATCC 208821 / CBS 10515 / FGSC 9487)</name>
    <name type="common">Filobasidiella neoformans var. grubii</name>
    <dbReference type="NCBI Taxonomy" id="235443"/>
    <lineage>
        <taxon>Eukaryota</taxon>
        <taxon>Fungi</taxon>
        <taxon>Dikarya</taxon>
        <taxon>Basidiomycota</taxon>
        <taxon>Agaricomycotina</taxon>
        <taxon>Tremellomycetes</taxon>
        <taxon>Tremellales</taxon>
        <taxon>Cryptococcaceae</taxon>
        <taxon>Cryptococcus</taxon>
        <taxon>Cryptococcus neoformans species complex</taxon>
    </lineage>
</organism>
<dbReference type="EMBL" id="CP003824">
    <property type="protein sequence ID" value="AFR94979.1"/>
    <property type="molecule type" value="Genomic_DNA"/>
</dbReference>
<dbReference type="RefSeq" id="XP_012049359.1">
    <property type="nucleotide sequence ID" value="XM_012193969.1"/>
</dbReference>
<dbReference type="SMR" id="J9VQV8"/>
<dbReference type="GeneID" id="23884908"/>
<dbReference type="KEGG" id="cng:CNAG_01166"/>
<dbReference type="VEuPathDB" id="FungiDB:CNAG_01166"/>
<dbReference type="HOGENOM" id="CLU_021703_1_1_1"/>
<dbReference type="OrthoDB" id="6560at5206"/>
<dbReference type="Proteomes" id="UP000010091">
    <property type="component" value="Chromosome 5"/>
</dbReference>
<dbReference type="GO" id="GO:0016020">
    <property type="term" value="C:membrane"/>
    <property type="evidence" value="ECO:0007669"/>
    <property type="project" value="UniProtKB-SubCell"/>
</dbReference>
<dbReference type="GO" id="GO:0016151">
    <property type="term" value="F:nickel cation binding"/>
    <property type="evidence" value="ECO:0007669"/>
    <property type="project" value="InterPro"/>
</dbReference>
<dbReference type="HAMAP" id="MF_01384">
    <property type="entry name" value="UreD"/>
    <property type="match status" value="1"/>
</dbReference>
<dbReference type="InterPro" id="IPR002669">
    <property type="entry name" value="UreD"/>
</dbReference>
<dbReference type="PANTHER" id="PTHR33643">
    <property type="entry name" value="UREASE ACCESSORY PROTEIN D"/>
    <property type="match status" value="1"/>
</dbReference>
<dbReference type="PANTHER" id="PTHR33643:SF1">
    <property type="entry name" value="UREASE ACCESSORY PROTEIN D"/>
    <property type="match status" value="1"/>
</dbReference>
<dbReference type="Pfam" id="PF01774">
    <property type="entry name" value="UreD"/>
    <property type="match status" value="1"/>
</dbReference>
<reference key="1">
    <citation type="journal article" date="2014" name="PLoS Genet.">
        <title>Analysis of the genome and transcriptome of Cryptococcus neoformans var. grubii reveals complex RNA expression and microevolution leading to virulence attenuation.</title>
        <authorList>
            <person name="Janbon G."/>
            <person name="Ormerod K.L."/>
            <person name="Paulet D."/>
            <person name="Byrnes E.J. III"/>
            <person name="Yadav V."/>
            <person name="Chatterjee G."/>
            <person name="Mullapudi N."/>
            <person name="Hon C.-C."/>
            <person name="Billmyre R.B."/>
            <person name="Brunel F."/>
            <person name="Bahn Y.-S."/>
            <person name="Chen W."/>
            <person name="Chen Y."/>
            <person name="Chow E.W.L."/>
            <person name="Coppee J.-Y."/>
            <person name="Floyd-Averette A."/>
            <person name="Gaillardin C."/>
            <person name="Gerik K.J."/>
            <person name="Goldberg J."/>
            <person name="Gonzalez-Hilarion S."/>
            <person name="Gujja S."/>
            <person name="Hamlin J.L."/>
            <person name="Hsueh Y.-P."/>
            <person name="Ianiri G."/>
            <person name="Jones S."/>
            <person name="Kodira C.D."/>
            <person name="Kozubowski L."/>
            <person name="Lam W."/>
            <person name="Marra M."/>
            <person name="Mesner L.D."/>
            <person name="Mieczkowski P.A."/>
            <person name="Moyrand F."/>
            <person name="Nielsen K."/>
            <person name="Proux C."/>
            <person name="Rossignol T."/>
            <person name="Schein J.E."/>
            <person name="Sun S."/>
            <person name="Wollschlaeger C."/>
            <person name="Wood I.A."/>
            <person name="Zeng Q."/>
            <person name="Neuveglise C."/>
            <person name="Newlon C.S."/>
            <person name="Perfect J.R."/>
            <person name="Lodge J.K."/>
            <person name="Idnurm A."/>
            <person name="Stajich J.E."/>
            <person name="Kronstad J.W."/>
            <person name="Sanyal K."/>
            <person name="Heitman J."/>
            <person name="Fraser J.A."/>
            <person name="Cuomo C.A."/>
            <person name="Dietrich F.S."/>
        </authorList>
    </citation>
    <scope>NUCLEOTIDE SEQUENCE [LARGE SCALE GENOMIC DNA]</scope>
    <source>
        <strain>H99 / ATCC 208821 / CBS 10515 / FGSC 9487</strain>
    </source>
</reference>
<reference key="2">
    <citation type="journal article" date="2013" name="MBio">
        <title>Factors required for activation of urease as a virulence determinant in Cryptococcus neoformans.</title>
        <authorList>
            <person name="Singh A."/>
            <person name="Panting R.J."/>
            <person name="Varma A."/>
            <person name="Saijo T."/>
            <person name="Waldron K.J."/>
            <person name="Jong A."/>
            <person name="Ngamskulrungroj P."/>
            <person name="Chang Y.C."/>
            <person name="Rutherford J.C."/>
            <person name="Kwon-Chung K.J."/>
        </authorList>
    </citation>
    <scope>FUNCTION</scope>
    <scope>DISRUPTION PHENOTYPE</scope>
    <scope>SUBUNIT</scope>
</reference>